<organism>
    <name type="scientific">Craspedocephalus gramineus</name>
    <name type="common">Bamboo pit viper</name>
    <name type="synonym">Trimeresurus gramineus</name>
    <dbReference type="NCBI Taxonomy" id="8767"/>
    <lineage>
        <taxon>Eukaryota</taxon>
        <taxon>Metazoa</taxon>
        <taxon>Chordata</taxon>
        <taxon>Craniata</taxon>
        <taxon>Vertebrata</taxon>
        <taxon>Euteleostomi</taxon>
        <taxon>Lepidosauria</taxon>
        <taxon>Squamata</taxon>
        <taxon>Bifurcata</taxon>
        <taxon>Unidentata</taxon>
        <taxon>Episquamata</taxon>
        <taxon>Toxicofera</taxon>
        <taxon>Serpentes</taxon>
        <taxon>Colubroidea</taxon>
        <taxon>Viperidae</taxon>
        <taxon>Crotalinae</taxon>
        <taxon>Craspedocephalus</taxon>
    </lineage>
</organism>
<reference key="1">
    <citation type="journal article" date="1993" name="Toxicon">
        <title>Purification, sequencing and characterization of single amino acid-substituted phospholipase A2 isozymes from Trimeresurus gramineus (green habu snake) venom.</title>
        <authorList>
            <person name="Fukagawa T."/>
            <person name="Nose T."/>
            <person name="Shimohigashi Y."/>
            <person name="Ogawa T."/>
            <person name="Oda N."/>
            <person name="Nakashima K."/>
            <person name="Chang C.-C."/>
            <person name="Ohno M."/>
        </authorList>
    </citation>
    <scope>PROTEIN SEQUENCE</scope>
    <source>
        <tissue>Venom</tissue>
    </source>
</reference>
<name>PA2A4_CRAGM</name>
<comment type="function">
    <text>Snake venom phospholipase A2 (PLA2) that has high lipolytic activity. PLA2 catalyzes the calcium-dependent hydrolysis of the 2-acyl groups in 3-sn-phosphoglycerides.</text>
</comment>
<comment type="catalytic activity">
    <reaction evidence="4 5">
        <text>a 1,2-diacyl-sn-glycero-3-phosphocholine + H2O = a 1-acyl-sn-glycero-3-phosphocholine + a fatty acid + H(+)</text>
        <dbReference type="Rhea" id="RHEA:15801"/>
        <dbReference type="ChEBI" id="CHEBI:15377"/>
        <dbReference type="ChEBI" id="CHEBI:15378"/>
        <dbReference type="ChEBI" id="CHEBI:28868"/>
        <dbReference type="ChEBI" id="CHEBI:57643"/>
        <dbReference type="ChEBI" id="CHEBI:58168"/>
        <dbReference type="EC" id="3.1.1.4"/>
    </reaction>
</comment>
<comment type="cofactor">
    <cofactor evidence="1">
        <name>Ca(2+)</name>
        <dbReference type="ChEBI" id="CHEBI:29108"/>
    </cofactor>
    <text evidence="1">Binds 1 Ca(2+) ion.</text>
</comment>
<comment type="subcellular location">
    <subcellularLocation>
        <location>Secreted</location>
    </subcellularLocation>
</comment>
<comment type="tissue specificity">
    <text>Expressed by the venom gland.</text>
</comment>
<comment type="similarity">
    <text evidence="6">Belongs to the phospholipase A2 family. Group II subfamily. D49 sub-subfamily.</text>
</comment>
<accession>P81479</accession>
<dbReference type="EC" id="3.1.1.4"/>
<dbReference type="PIR" id="B37478">
    <property type="entry name" value="B37478"/>
</dbReference>
<dbReference type="SMR" id="P81479"/>
<dbReference type="GO" id="GO:0005576">
    <property type="term" value="C:extracellular region"/>
    <property type="evidence" value="ECO:0007669"/>
    <property type="project" value="UniProtKB-SubCell"/>
</dbReference>
<dbReference type="GO" id="GO:0005509">
    <property type="term" value="F:calcium ion binding"/>
    <property type="evidence" value="ECO:0007669"/>
    <property type="project" value="InterPro"/>
</dbReference>
<dbReference type="GO" id="GO:0047498">
    <property type="term" value="F:calcium-dependent phospholipase A2 activity"/>
    <property type="evidence" value="ECO:0007669"/>
    <property type="project" value="TreeGrafter"/>
</dbReference>
<dbReference type="GO" id="GO:0005543">
    <property type="term" value="F:phospholipid binding"/>
    <property type="evidence" value="ECO:0007669"/>
    <property type="project" value="TreeGrafter"/>
</dbReference>
<dbReference type="GO" id="GO:0050482">
    <property type="term" value="P:arachidonate secretion"/>
    <property type="evidence" value="ECO:0007669"/>
    <property type="project" value="InterPro"/>
</dbReference>
<dbReference type="GO" id="GO:0016042">
    <property type="term" value="P:lipid catabolic process"/>
    <property type="evidence" value="ECO:0007669"/>
    <property type="project" value="UniProtKB-KW"/>
</dbReference>
<dbReference type="GO" id="GO:0042130">
    <property type="term" value="P:negative regulation of T cell proliferation"/>
    <property type="evidence" value="ECO:0007669"/>
    <property type="project" value="TreeGrafter"/>
</dbReference>
<dbReference type="GO" id="GO:0006644">
    <property type="term" value="P:phospholipid metabolic process"/>
    <property type="evidence" value="ECO:0007669"/>
    <property type="project" value="InterPro"/>
</dbReference>
<dbReference type="CDD" id="cd00125">
    <property type="entry name" value="PLA2c"/>
    <property type="match status" value="1"/>
</dbReference>
<dbReference type="FunFam" id="1.20.90.10:FF:000001">
    <property type="entry name" value="Basic phospholipase A2 homolog"/>
    <property type="match status" value="1"/>
</dbReference>
<dbReference type="Gene3D" id="1.20.90.10">
    <property type="entry name" value="Phospholipase A2 domain"/>
    <property type="match status" value="1"/>
</dbReference>
<dbReference type="InterPro" id="IPR001211">
    <property type="entry name" value="PLipase_A2"/>
</dbReference>
<dbReference type="InterPro" id="IPR033112">
    <property type="entry name" value="PLipase_A2_Asp_AS"/>
</dbReference>
<dbReference type="InterPro" id="IPR016090">
    <property type="entry name" value="PLipase_A2_dom"/>
</dbReference>
<dbReference type="InterPro" id="IPR036444">
    <property type="entry name" value="PLipase_A2_dom_sf"/>
</dbReference>
<dbReference type="InterPro" id="IPR033113">
    <property type="entry name" value="PLipase_A2_His_AS"/>
</dbReference>
<dbReference type="PANTHER" id="PTHR11716">
    <property type="entry name" value="PHOSPHOLIPASE A2 FAMILY MEMBER"/>
    <property type="match status" value="1"/>
</dbReference>
<dbReference type="PANTHER" id="PTHR11716:SF9">
    <property type="entry name" value="PHOSPHOLIPASE A2, MEMBRANE ASSOCIATED"/>
    <property type="match status" value="1"/>
</dbReference>
<dbReference type="Pfam" id="PF00068">
    <property type="entry name" value="Phospholip_A2_1"/>
    <property type="match status" value="1"/>
</dbReference>
<dbReference type="PRINTS" id="PR00389">
    <property type="entry name" value="PHPHLIPASEA2"/>
</dbReference>
<dbReference type="SMART" id="SM00085">
    <property type="entry name" value="PA2c"/>
    <property type="match status" value="1"/>
</dbReference>
<dbReference type="SUPFAM" id="SSF48619">
    <property type="entry name" value="Phospholipase A2, PLA2"/>
    <property type="match status" value="1"/>
</dbReference>
<dbReference type="PROSITE" id="PS00119">
    <property type="entry name" value="PA2_ASP"/>
    <property type="match status" value="1"/>
</dbReference>
<dbReference type="PROSITE" id="PS00118">
    <property type="entry name" value="PA2_HIS"/>
    <property type="match status" value="1"/>
</dbReference>
<proteinExistence type="evidence at protein level"/>
<sequence length="122" mass="13792">HLMQFETLIMKVAGRSGVWYYGSYGCFCGAGGQGRPQDASDRCCFVHDCCYGKVNGCDPKKDFYTYSEENGDIVCGGDDPCKKEICECDKDAAICFRDNKDTYDNKYWFFPAKNCQEESEPC</sequence>
<protein>
    <recommendedName>
        <fullName>Acidic phospholipase A2 4</fullName>
        <shortName>svPLA2</shortName>
        <ecNumber>3.1.1.4</ecNumber>
    </recommendedName>
    <alternativeName>
        <fullName>Phosphatidylcholine 2-acylhydrolase</fullName>
    </alternativeName>
    <alternativeName>
        <fullName>Phospholipase A2 isozyme IV</fullName>
        <shortName>PLA2-IV</shortName>
    </alternativeName>
</protein>
<evidence type="ECO:0000250" key="1"/>
<evidence type="ECO:0000250" key="2">
    <source>
        <dbReference type="UniProtKB" id="O42187"/>
    </source>
</evidence>
<evidence type="ECO:0000250" key="3">
    <source>
        <dbReference type="UniProtKB" id="P06859"/>
    </source>
</evidence>
<evidence type="ECO:0000255" key="4">
    <source>
        <dbReference type="PROSITE-ProRule" id="PRU10035"/>
    </source>
</evidence>
<evidence type="ECO:0000255" key="5">
    <source>
        <dbReference type="PROSITE-ProRule" id="PRU10036"/>
    </source>
</evidence>
<evidence type="ECO:0000305" key="6"/>
<feature type="chain" id="PRO_0000161704" description="Acidic phospholipase A2 4">
    <location>
        <begin position="1"/>
        <end position="122"/>
    </location>
</feature>
<feature type="active site" evidence="3">
    <location>
        <position position="47"/>
    </location>
</feature>
<feature type="active site" evidence="3">
    <location>
        <position position="89"/>
    </location>
</feature>
<feature type="binding site" evidence="2">
    <location>
        <position position="27"/>
    </location>
    <ligand>
        <name>Ca(2+)</name>
        <dbReference type="ChEBI" id="CHEBI:29108"/>
    </ligand>
</feature>
<feature type="binding site" evidence="2">
    <location>
        <position position="29"/>
    </location>
    <ligand>
        <name>Ca(2+)</name>
        <dbReference type="ChEBI" id="CHEBI:29108"/>
    </ligand>
</feature>
<feature type="binding site" evidence="2">
    <location>
        <position position="31"/>
    </location>
    <ligand>
        <name>Ca(2+)</name>
        <dbReference type="ChEBI" id="CHEBI:29108"/>
    </ligand>
</feature>
<feature type="binding site" evidence="2">
    <location>
        <position position="48"/>
    </location>
    <ligand>
        <name>Ca(2+)</name>
        <dbReference type="ChEBI" id="CHEBI:29108"/>
    </ligand>
</feature>
<feature type="disulfide bond" evidence="2">
    <location>
        <begin position="26"/>
        <end position="115"/>
    </location>
</feature>
<feature type="disulfide bond" evidence="2">
    <location>
        <begin position="28"/>
        <end position="44"/>
    </location>
</feature>
<feature type="disulfide bond" evidence="2">
    <location>
        <begin position="43"/>
        <end position="95"/>
    </location>
</feature>
<feature type="disulfide bond" evidence="2">
    <location>
        <begin position="49"/>
        <end position="122"/>
    </location>
</feature>
<feature type="disulfide bond" evidence="2">
    <location>
        <begin position="50"/>
        <end position="88"/>
    </location>
</feature>
<feature type="disulfide bond" evidence="2">
    <location>
        <begin position="57"/>
        <end position="81"/>
    </location>
</feature>
<feature type="disulfide bond" evidence="2">
    <location>
        <begin position="75"/>
        <end position="86"/>
    </location>
</feature>
<keyword id="KW-0106">Calcium</keyword>
<keyword id="KW-0903">Direct protein sequencing</keyword>
<keyword id="KW-1015">Disulfide bond</keyword>
<keyword id="KW-0378">Hydrolase</keyword>
<keyword id="KW-0442">Lipid degradation</keyword>
<keyword id="KW-0443">Lipid metabolism</keyword>
<keyword id="KW-0479">Metal-binding</keyword>
<keyword id="KW-0964">Secreted</keyword>